<gene>
    <name type="primary">ddeIR</name>
    <name type="synonym">ddeR</name>
</gene>
<accession>P05301</accession>
<evidence type="ECO:0000303" key="1">
    <source>
    </source>
</evidence>
<evidence type="ECO:0000303" key="2">
    <source>
    </source>
</evidence>
<evidence type="ECO:0000305" key="3">
    <source>
    </source>
</evidence>
<feature type="chain" id="PRO_0000077299" description="Type II restriction enzyme DdeI">
    <location>
        <begin position="1"/>
        <end position="240"/>
    </location>
</feature>
<keyword id="KW-0255">Endonuclease</keyword>
<keyword id="KW-0378">Hydrolase</keyword>
<keyword id="KW-0540">Nuclease</keyword>
<keyword id="KW-0680">Restriction system</keyword>
<comment type="function">
    <text evidence="1 3">A P subtype restriction enzyme that recognizes the double-stranded sequence 5'-CTNAG-3' and cleaves after C-1.</text>
</comment>
<comment type="catalytic activity">
    <reaction>
        <text>Endonucleolytic cleavage of DNA to give specific double-stranded fragments with terminal 5'-phosphates.</text>
        <dbReference type="EC" id="3.1.21.4"/>
    </reaction>
</comment>
<reference key="1">
    <citation type="journal article" date="1987" name="Nucleic Acids Res.">
        <title>Nucleotide sequence of the DdeI restriction-modification system and characterization of the methylase protein.</title>
        <authorList>
            <person name="Sznyter L.A."/>
            <person name="Slatko B."/>
            <person name="Moran L."/>
            <person name="O'Donnell K.H."/>
            <person name="Brooks J.E."/>
        </authorList>
    </citation>
    <scope>NUCLEOTIDE SEQUENCE [GENOMIC DNA]</scope>
    <scope>FUNCTION</scope>
</reference>
<reference key="2">
    <citation type="journal article" date="2003" name="Nucleic Acids Res.">
        <title>A nomenclature for restriction enzymes, DNA methyltransferases, homing endonucleases and their genes.</title>
        <authorList>
            <person name="Roberts R.J."/>
            <person name="Belfort M."/>
            <person name="Bestor T."/>
            <person name="Bhagwat A.S."/>
            <person name="Bickle T.A."/>
            <person name="Bitinaite J."/>
            <person name="Blumenthal R.M."/>
            <person name="Degtyarev S.K."/>
            <person name="Dryden D.T."/>
            <person name="Dybvig K."/>
            <person name="Firman K."/>
            <person name="Gromova E.S."/>
            <person name="Gumport R.I."/>
            <person name="Halford S.E."/>
            <person name="Hattman S."/>
            <person name="Heitman J."/>
            <person name="Hornby D.P."/>
            <person name="Janulaitis A."/>
            <person name="Jeltsch A."/>
            <person name="Josephsen J."/>
            <person name="Kiss A."/>
            <person name="Klaenhammer T.R."/>
            <person name="Kobayashi I."/>
            <person name="Kong H."/>
            <person name="Krueger D.H."/>
            <person name="Lacks S."/>
            <person name="Marinus M.G."/>
            <person name="Miyahara M."/>
            <person name="Morgan R.D."/>
            <person name="Murray N.E."/>
            <person name="Nagaraja V."/>
            <person name="Piekarowicz A."/>
            <person name="Pingoud A."/>
            <person name="Raleigh E."/>
            <person name="Rao D.N."/>
            <person name="Reich N."/>
            <person name="Repin V.E."/>
            <person name="Selker E.U."/>
            <person name="Shaw P.C."/>
            <person name="Stein D.C."/>
            <person name="Stoddard B.L."/>
            <person name="Szybalski W."/>
            <person name="Trautner T.A."/>
            <person name="Van Etten J.L."/>
            <person name="Vitor J.M."/>
            <person name="Wilson G.G."/>
            <person name="Xu S.Y."/>
        </authorList>
    </citation>
    <scope>NOMENCLATURE</scope>
    <scope>SUBTYPE</scope>
</reference>
<organism>
    <name type="scientific">Desulfomicrobium norvegicum (strain DSM 1741 / NCIMB 8310)</name>
    <name type="common">Desulfovibrio baculatus (strain Norway 4)</name>
    <name type="synonym">Desulfovibrio desulfuricans (strain Norway 4)</name>
    <dbReference type="NCBI Taxonomy" id="52561"/>
    <lineage>
        <taxon>Bacteria</taxon>
        <taxon>Pseudomonadati</taxon>
        <taxon>Thermodesulfobacteriota</taxon>
        <taxon>Desulfovibrionia</taxon>
        <taxon>Desulfovibrionales</taxon>
        <taxon>Desulfomicrobiaceae</taxon>
        <taxon>Desulfomicrobium</taxon>
    </lineage>
</organism>
<protein>
    <recommendedName>
        <fullName evidence="1">Type II restriction enzyme DdeI</fullName>
        <shortName evidence="2">R.DdeI</shortName>
        <ecNumber>3.1.21.4</ecNumber>
    </recommendedName>
    <alternativeName>
        <fullName>Endonuclease DdeI</fullName>
    </alternativeName>
    <alternativeName>
        <fullName>Type-2 restriction enzyme DdeI</fullName>
    </alternativeName>
</protein>
<dbReference type="EC" id="3.1.21.4"/>
<dbReference type="EMBL" id="Y00449">
    <property type="protein sequence ID" value="CAA68504.1"/>
    <property type="molecule type" value="Genomic_DNA"/>
</dbReference>
<dbReference type="RefSeq" id="WP_092194696.1">
    <property type="nucleotide sequence ID" value="NZ_FOTO01000026.1"/>
</dbReference>
<dbReference type="STRING" id="52561.SAMN05421830_1264"/>
<dbReference type="REBASE" id="770">
    <property type="entry name" value="DdeI"/>
</dbReference>
<dbReference type="OrthoDB" id="9811614at2"/>
<dbReference type="PRO" id="PR:P05301"/>
<dbReference type="GO" id="GO:0009036">
    <property type="term" value="F:type II site-specific deoxyribonuclease activity"/>
    <property type="evidence" value="ECO:0007669"/>
    <property type="project" value="UniProtKB-EC"/>
</dbReference>
<dbReference type="GO" id="GO:0009307">
    <property type="term" value="P:DNA restriction-modification system"/>
    <property type="evidence" value="ECO:0007669"/>
    <property type="project" value="UniProtKB-KW"/>
</dbReference>
<sequence>MKAATDQELRKLIVLYNNVMEVMEHDAAKSMRDDNRAYGGFVRAAKGKIQELITERLVRTVWDVEMGENPERLSINSKKIKIPILRSYVDSINDENLKKYISSNILKYSYGLSVDKHVFIDNKFVLGIECKAYTENAMLKRILVDFYLLKTKFPKLNCFLFQLESQLGGDYSECNKFPIGSYPTRTIMSYFKNVDLNIVTLLEGERKVDRPINKPQFFKPLKVEHLEVAIGYLQESLSEI</sequence>
<proteinExistence type="predicted"/>
<name>T2D1_DESNO</name>